<organism>
    <name type="scientific">Salmonella dublin (strain CT_02021853)</name>
    <dbReference type="NCBI Taxonomy" id="439851"/>
    <lineage>
        <taxon>Bacteria</taxon>
        <taxon>Pseudomonadati</taxon>
        <taxon>Pseudomonadota</taxon>
        <taxon>Gammaproteobacteria</taxon>
        <taxon>Enterobacterales</taxon>
        <taxon>Enterobacteriaceae</taxon>
        <taxon>Salmonella</taxon>
    </lineage>
</organism>
<sequence length="447" mass="49769">MTTILKHLPAGQRIGIAFSGGLDTSAALLWMRQKGAVPYAYTANLGQPDEDDYDAIPRRAMEYGAENARLIDCRKQLVAEGIAAIQCGAFHNTTGGLTYFNTTPLGRAVTGTMLVAAMKEDGVNIWGDGSTYKGNDIERFYRYGLLTNAELQIYKPWLDTDFIDELGGRHEMSEFMIACGFDYKMSVEKAYSTDSNMLGATHEAKDLEFLNSSVKIVNPIMGVKFWDESVKIPAEEVTVRFEQGHPVALNGKTFSDDVEMMLEANRIGGRHGLGMSDQIENRIIEAKSRGIYEAPGMALLHIAYERLLTGIHNEDTIEQYHSHGRQLGKLLYLGRWFDSQALMLRDGLQRWVASQITGEVTLELRRGNDYSILNTVSDNLTYKAERLTMEKGESVFSPDDRIGQLTMRNLDITDTREKLFGYAKAGLLTASSATGLPQVENLENKGK</sequence>
<accession>B5FI16</accession>
<name>ASSY_SALDC</name>
<keyword id="KW-0028">Amino-acid biosynthesis</keyword>
<keyword id="KW-0055">Arginine biosynthesis</keyword>
<keyword id="KW-0067">ATP-binding</keyword>
<keyword id="KW-0963">Cytoplasm</keyword>
<keyword id="KW-0436">Ligase</keyword>
<keyword id="KW-0547">Nucleotide-binding</keyword>
<reference key="1">
    <citation type="journal article" date="2011" name="J. Bacteriol.">
        <title>Comparative genomics of 28 Salmonella enterica isolates: evidence for CRISPR-mediated adaptive sublineage evolution.</title>
        <authorList>
            <person name="Fricke W.F."/>
            <person name="Mammel M.K."/>
            <person name="McDermott P.F."/>
            <person name="Tartera C."/>
            <person name="White D.G."/>
            <person name="Leclerc J.E."/>
            <person name="Ravel J."/>
            <person name="Cebula T.A."/>
        </authorList>
    </citation>
    <scope>NUCLEOTIDE SEQUENCE [LARGE SCALE GENOMIC DNA]</scope>
    <source>
        <strain>CT_02021853</strain>
    </source>
</reference>
<protein>
    <recommendedName>
        <fullName evidence="1">Argininosuccinate synthase</fullName>
        <ecNumber evidence="1">6.3.4.5</ecNumber>
    </recommendedName>
    <alternativeName>
        <fullName evidence="1">Citrulline--aspartate ligase</fullName>
    </alternativeName>
</protein>
<feature type="chain" id="PRO_1000129764" description="Argininosuccinate synthase">
    <location>
        <begin position="1"/>
        <end position="447"/>
    </location>
</feature>
<feature type="binding site" evidence="1">
    <location>
        <begin position="17"/>
        <end position="25"/>
    </location>
    <ligand>
        <name>ATP</name>
        <dbReference type="ChEBI" id="CHEBI:30616"/>
    </ligand>
</feature>
<feature type="binding site" evidence="1">
    <location>
        <position position="43"/>
    </location>
    <ligand>
        <name>ATP</name>
        <dbReference type="ChEBI" id="CHEBI:30616"/>
    </ligand>
</feature>
<feature type="binding site" evidence="1">
    <location>
        <position position="99"/>
    </location>
    <ligand>
        <name>L-citrulline</name>
        <dbReference type="ChEBI" id="CHEBI:57743"/>
    </ligand>
</feature>
<feature type="binding site" evidence="1">
    <location>
        <position position="129"/>
    </location>
    <ligand>
        <name>ATP</name>
        <dbReference type="ChEBI" id="CHEBI:30616"/>
    </ligand>
</feature>
<feature type="binding site" evidence="1">
    <location>
        <position position="131"/>
    </location>
    <ligand>
        <name>ATP</name>
        <dbReference type="ChEBI" id="CHEBI:30616"/>
    </ligand>
</feature>
<feature type="binding site" evidence="1">
    <location>
        <position position="131"/>
    </location>
    <ligand>
        <name>L-aspartate</name>
        <dbReference type="ChEBI" id="CHEBI:29991"/>
    </ligand>
</feature>
<feature type="binding site" evidence="1">
    <location>
        <position position="135"/>
    </location>
    <ligand>
        <name>L-aspartate</name>
        <dbReference type="ChEBI" id="CHEBI:29991"/>
    </ligand>
</feature>
<feature type="binding site" evidence="1">
    <location>
        <position position="135"/>
    </location>
    <ligand>
        <name>L-citrulline</name>
        <dbReference type="ChEBI" id="CHEBI:57743"/>
    </ligand>
</feature>
<feature type="binding site" evidence="1">
    <location>
        <position position="136"/>
    </location>
    <ligand>
        <name>ATP</name>
        <dbReference type="ChEBI" id="CHEBI:30616"/>
    </ligand>
</feature>
<feature type="binding site" evidence="1">
    <location>
        <position position="136"/>
    </location>
    <ligand>
        <name>L-aspartate</name>
        <dbReference type="ChEBI" id="CHEBI:29991"/>
    </ligand>
</feature>
<feature type="binding site" evidence="1">
    <location>
        <position position="139"/>
    </location>
    <ligand>
        <name>L-citrulline</name>
        <dbReference type="ChEBI" id="CHEBI:57743"/>
    </ligand>
</feature>
<feature type="binding site" evidence="1">
    <location>
        <position position="192"/>
    </location>
    <ligand>
        <name>L-citrulline</name>
        <dbReference type="ChEBI" id="CHEBI:57743"/>
    </ligand>
</feature>
<feature type="binding site" evidence="1">
    <location>
        <position position="194"/>
    </location>
    <ligand>
        <name>ATP</name>
        <dbReference type="ChEBI" id="CHEBI:30616"/>
    </ligand>
</feature>
<feature type="binding site" evidence="1">
    <location>
        <position position="201"/>
    </location>
    <ligand>
        <name>L-citrulline</name>
        <dbReference type="ChEBI" id="CHEBI:57743"/>
    </ligand>
</feature>
<feature type="binding site" evidence="1">
    <location>
        <position position="203"/>
    </location>
    <ligand>
        <name>L-citrulline</name>
        <dbReference type="ChEBI" id="CHEBI:57743"/>
    </ligand>
</feature>
<feature type="binding site" evidence="1">
    <location>
        <position position="280"/>
    </location>
    <ligand>
        <name>L-citrulline</name>
        <dbReference type="ChEBI" id="CHEBI:57743"/>
    </ligand>
</feature>
<gene>
    <name evidence="1" type="primary">argG</name>
    <name type="ordered locus">SeD_A3647</name>
</gene>
<comment type="catalytic activity">
    <reaction evidence="1">
        <text>L-citrulline + L-aspartate + ATP = 2-(N(omega)-L-arginino)succinate + AMP + diphosphate + H(+)</text>
        <dbReference type="Rhea" id="RHEA:10932"/>
        <dbReference type="ChEBI" id="CHEBI:15378"/>
        <dbReference type="ChEBI" id="CHEBI:29991"/>
        <dbReference type="ChEBI" id="CHEBI:30616"/>
        <dbReference type="ChEBI" id="CHEBI:33019"/>
        <dbReference type="ChEBI" id="CHEBI:57472"/>
        <dbReference type="ChEBI" id="CHEBI:57743"/>
        <dbReference type="ChEBI" id="CHEBI:456215"/>
        <dbReference type="EC" id="6.3.4.5"/>
    </reaction>
</comment>
<comment type="pathway">
    <text evidence="1">Amino-acid biosynthesis; L-arginine biosynthesis; L-arginine from L-ornithine and carbamoyl phosphate: step 2/3.</text>
</comment>
<comment type="subunit">
    <text evidence="1">Homotetramer.</text>
</comment>
<comment type="subcellular location">
    <subcellularLocation>
        <location evidence="1">Cytoplasm</location>
    </subcellularLocation>
</comment>
<comment type="similarity">
    <text evidence="1">Belongs to the argininosuccinate synthase family. Type 2 subfamily.</text>
</comment>
<evidence type="ECO:0000255" key="1">
    <source>
        <dbReference type="HAMAP-Rule" id="MF_00581"/>
    </source>
</evidence>
<dbReference type="EC" id="6.3.4.5" evidence="1"/>
<dbReference type="EMBL" id="CP001144">
    <property type="protein sequence ID" value="ACH74488.1"/>
    <property type="molecule type" value="Genomic_DNA"/>
</dbReference>
<dbReference type="SMR" id="B5FI16"/>
<dbReference type="KEGG" id="sed:SeD_A3647"/>
<dbReference type="HOGENOM" id="CLU_032784_4_1_6"/>
<dbReference type="UniPathway" id="UPA00068">
    <property type="reaction ID" value="UER00113"/>
</dbReference>
<dbReference type="Proteomes" id="UP000008322">
    <property type="component" value="Chromosome"/>
</dbReference>
<dbReference type="GO" id="GO:0005737">
    <property type="term" value="C:cytoplasm"/>
    <property type="evidence" value="ECO:0007669"/>
    <property type="project" value="UniProtKB-SubCell"/>
</dbReference>
<dbReference type="GO" id="GO:0004055">
    <property type="term" value="F:argininosuccinate synthase activity"/>
    <property type="evidence" value="ECO:0007669"/>
    <property type="project" value="UniProtKB-UniRule"/>
</dbReference>
<dbReference type="GO" id="GO:0005524">
    <property type="term" value="F:ATP binding"/>
    <property type="evidence" value="ECO:0007669"/>
    <property type="project" value="UniProtKB-UniRule"/>
</dbReference>
<dbReference type="GO" id="GO:0042803">
    <property type="term" value="F:protein homodimerization activity"/>
    <property type="evidence" value="ECO:0007669"/>
    <property type="project" value="InterPro"/>
</dbReference>
<dbReference type="GO" id="GO:0000053">
    <property type="term" value="P:argininosuccinate metabolic process"/>
    <property type="evidence" value="ECO:0007669"/>
    <property type="project" value="TreeGrafter"/>
</dbReference>
<dbReference type="GO" id="GO:0006526">
    <property type="term" value="P:L-arginine biosynthetic process"/>
    <property type="evidence" value="ECO:0007669"/>
    <property type="project" value="UniProtKB-UniRule"/>
</dbReference>
<dbReference type="GO" id="GO:0000050">
    <property type="term" value="P:urea cycle"/>
    <property type="evidence" value="ECO:0007669"/>
    <property type="project" value="TreeGrafter"/>
</dbReference>
<dbReference type="CDD" id="cd01999">
    <property type="entry name" value="ASS"/>
    <property type="match status" value="1"/>
</dbReference>
<dbReference type="FunFam" id="1.10.287.400:FF:000001">
    <property type="entry name" value="Argininosuccinate synthase"/>
    <property type="match status" value="1"/>
</dbReference>
<dbReference type="Gene3D" id="1.10.287.400">
    <property type="match status" value="1"/>
</dbReference>
<dbReference type="Gene3D" id="3.90.1260.10">
    <property type="entry name" value="Argininosuccinate synthetase, chain A, domain 2"/>
    <property type="match status" value="1"/>
</dbReference>
<dbReference type="Gene3D" id="3.40.50.620">
    <property type="entry name" value="HUPs"/>
    <property type="match status" value="1"/>
</dbReference>
<dbReference type="HAMAP" id="MF_00581">
    <property type="entry name" value="Arg_succ_synth_type2"/>
    <property type="match status" value="1"/>
</dbReference>
<dbReference type="InterPro" id="IPR023437">
    <property type="entry name" value="Arg_succ_synth_type2_subfam"/>
</dbReference>
<dbReference type="InterPro" id="IPR048268">
    <property type="entry name" value="Arginosuc_syn_C"/>
</dbReference>
<dbReference type="InterPro" id="IPR048267">
    <property type="entry name" value="Arginosuc_syn_N"/>
</dbReference>
<dbReference type="InterPro" id="IPR001518">
    <property type="entry name" value="Arginosuc_synth"/>
</dbReference>
<dbReference type="InterPro" id="IPR018223">
    <property type="entry name" value="Arginosuc_synth_CS"/>
</dbReference>
<dbReference type="InterPro" id="IPR023434">
    <property type="entry name" value="Arginosuc_synth_type_1_subfam"/>
</dbReference>
<dbReference type="InterPro" id="IPR024074">
    <property type="entry name" value="AS_cat/multimer_dom_body"/>
</dbReference>
<dbReference type="InterPro" id="IPR024073">
    <property type="entry name" value="AS_multimer_C_tail"/>
</dbReference>
<dbReference type="InterPro" id="IPR014729">
    <property type="entry name" value="Rossmann-like_a/b/a_fold"/>
</dbReference>
<dbReference type="NCBIfam" id="TIGR00032">
    <property type="entry name" value="argG"/>
    <property type="match status" value="1"/>
</dbReference>
<dbReference type="NCBIfam" id="NF003779">
    <property type="entry name" value="PRK05370.1"/>
    <property type="match status" value="1"/>
</dbReference>
<dbReference type="PANTHER" id="PTHR11587">
    <property type="entry name" value="ARGININOSUCCINATE SYNTHASE"/>
    <property type="match status" value="1"/>
</dbReference>
<dbReference type="PANTHER" id="PTHR11587:SF2">
    <property type="entry name" value="ARGININOSUCCINATE SYNTHASE"/>
    <property type="match status" value="1"/>
</dbReference>
<dbReference type="Pfam" id="PF20979">
    <property type="entry name" value="Arginosuc_syn_C"/>
    <property type="match status" value="1"/>
</dbReference>
<dbReference type="Pfam" id="PF00764">
    <property type="entry name" value="Arginosuc_synth"/>
    <property type="match status" value="1"/>
</dbReference>
<dbReference type="SUPFAM" id="SSF52402">
    <property type="entry name" value="Adenine nucleotide alpha hydrolases-like"/>
    <property type="match status" value="1"/>
</dbReference>
<dbReference type="SUPFAM" id="SSF69864">
    <property type="entry name" value="Argininosuccinate synthetase, C-terminal domain"/>
    <property type="match status" value="1"/>
</dbReference>
<dbReference type="PROSITE" id="PS00564">
    <property type="entry name" value="ARGININOSUCCIN_SYN_1"/>
    <property type="match status" value="1"/>
</dbReference>
<dbReference type="PROSITE" id="PS00565">
    <property type="entry name" value="ARGININOSUCCIN_SYN_2"/>
    <property type="match status" value="1"/>
</dbReference>
<proteinExistence type="inferred from homology"/>